<gene>
    <name evidence="1" type="primary">hisS</name>
    <name type="ordered locus">HH_1809</name>
</gene>
<comment type="catalytic activity">
    <reaction evidence="1">
        <text>tRNA(His) + L-histidine + ATP = L-histidyl-tRNA(His) + AMP + diphosphate + H(+)</text>
        <dbReference type="Rhea" id="RHEA:17313"/>
        <dbReference type="Rhea" id="RHEA-COMP:9665"/>
        <dbReference type="Rhea" id="RHEA-COMP:9689"/>
        <dbReference type="ChEBI" id="CHEBI:15378"/>
        <dbReference type="ChEBI" id="CHEBI:30616"/>
        <dbReference type="ChEBI" id="CHEBI:33019"/>
        <dbReference type="ChEBI" id="CHEBI:57595"/>
        <dbReference type="ChEBI" id="CHEBI:78442"/>
        <dbReference type="ChEBI" id="CHEBI:78527"/>
        <dbReference type="ChEBI" id="CHEBI:456215"/>
        <dbReference type="EC" id="6.1.1.21"/>
    </reaction>
</comment>
<comment type="subunit">
    <text evidence="1">Homodimer.</text>
</comment>
<comment type="subcellular location">
    <subcellularLocation>
        <location evidence="1">Cytoplasm</location>
    </subcellularLocation>
</comment>
<comment type="similarity">
    <text evidence="1">Belongs to the class-II aminoacyl-tRNA synthetase family.</text>
</comment>
<accession>Q7VF68</accession>
<sequence length="442" mass="50382">MALVTPRTLSGFKDRLPKEALAKAHLLNKVSNVFMNFGFVPIETPHLEYADVLIKQGSDEIQKELYRFKDHGGRDVALRFDLTVPLARFVSQYKNEVGLPFKRYAIGNVFRGERAQRGRYREFTQCDFDFIGSDSISCDAEILQVIYASLMKLGIEEFTIWLNHRSILNGICEYCGITQEKDINVALRIIDKLDKIGKERVSEELQKELGLNNNQVENLLEYTSIKQQGESESFFRQISFMEEWNDSIKKGIEDLKMLYEVLSSLQMDRDTYRVNFSIARGLGYYTGIVYETTLNALKSIGSVCSGGRYDNLTRTFSKEKMSGVGASIGIDRLLAALEELELLQKRATSARALIVCMDRLYFGYAHLLAESFRCSEIPIEVYPEASKLKKQFTYAHLKGYEFVVVIGENEFNTKTLTLKNMTSGVQIDSISFLKALALIQEE</sequence>
<protein>
    <recommendedName>
        <fullName evidence="1">Histidine--tRNA ligase</fullName>
        <ecNumber evidence="1">6.1.1.21</ecNumber>
    </recommendedName>
    <alternativeName>
        <fullName evidence="1">Histidyl-tRNA synthetase</fullName>
        <shortName evidence="1">HisRS</shortName>
    </alternativeName>
</protein>
<organism>
    <name type="scientific">Helicobacter hepaticus (strain ATCC 51449 / 3B1)</name>
    <dbReference type="NCBI Taxonomy" id="235279"/>
    <lineage>
        <taxon>Bacteria</taxon>
        <taxon>Pseudomonadati</taxon>
        <taxon>Campylobacterota</taxon>
        <taxon>Epsilonproteobacteria</taxon>
        <taxon>Campylobacterales</taxon>
        <taxon>Helicobacteraceae</taxon>
        <taxon>Helicobacter</taxon>
    </lineage>
</organism>
<dbReference type="EC" id="6.1.1.21" evidence="1"/>
<dbReference type="EMBL" id="AE017125">
    <property type="protein sequence ID" value="AAP78406.1"/>
    <property type="molecule type" value="Genomic_DNA"/>
</dbReference>
<dbReference type="SMR" id="Q7VF68"/>
<dbReference type="STRING" id="235279.HH_1809"/>
<dbReference type="KEGG" id="hhe:HH_1809"/>
<dbReference type="eggNOG" id="COG0124">
    <property type="taxonomic scope" value="Bacteria"/>
</dbReference>
<dbReference type="HOGENOM" id="CLU_025113_3_0_7"/>
<dbReference type="OrthoDB" id="9800814at2"/>
<dbReference type="Proteomes" id="UP000002495">
    <property type="component" value="Chromosome"/>
</dbReference>
<dbReference type="GO" id="GO:0005737">
    <property type="term" value="C:cytoplasm"/>
    <property type="evidence" value="ECO:0007669"/>
    <property type="project" value="UniProtKB-SubCell"/>
</dbReference>
<dbReference type="GO" id="GO:0005524">
    <property type="term" value="F:ATP binding"/>
    <property type="evidence" value="ECO:0007669"/>
    <property type="project" value="UniProtKB-UniRule"/>
</dbReference>
<dbReference type="GO" id="GO:0004821">
    <property type="term" value="F:histidine-tRNA ligase activity"/>
    <property type="evidence" value="ECO:0007669"/>
    <property type="project" value="UniProtKB-UniRule"/>
</dbReference>
<dbReference type="GO" id="GO:0006427">
    <property type="term" value="P:histidyl-tRNA aminoacylation"/>
    <property type="evidence" value="ECO:0007669"/>
    <property type="project" value="UniProtKB-UniRule"/>
</dbReference>
<dbReference type="CDD" id="cd00773">
    <property type="entry name" value="HisRS-like_core"/>
    <property type="match status" value="1"/>
</dbReference>
<dbReference type="Gene3D" id="3.40.50.800">
    <property type="entry name" value="Anticodon-binding domain"/>
    <property type="match status" value="1"/>
</dbReference>
<dbReference type="Gene3D" id="3.30.930.10">
    <property type="entry name" value="Bira Bifunctional Protein, Domain 2"/>
    <property type="match status" value="1"/>
</dbReference>
<dbReference type="HAMAP" id="MF_00127">
    <property type="entry name" value="His_tRNA_synth"/>
    <property type="match status" value="1"/>
</dbReference>
<dbReference type="InterPro" id="IPR006195">
    <property type="entry name" value="aa-tRNA-synth_II"/>
</dbReference>
<dbReference type="InterPro" id="IPR045864">
    <property type="entry name" value="aa-tRNA-synth_II/BPL/LPL"/>
</dbReference>
<dbReference type="InterPro" id="IPR004154">
    <property type="entry name" value="Anticodon-bd"/>
</dbReference>
<dbReference type="InterPro" id="IPR036621">
    <property type="entry name" value="Anticodon-bd_dom_sf"/>
</dbReference>
<dbReference type="InterPro" id="IPR015807">
    <property type="entry name" value="His-tRNA-ligase"/>
</dbReference>
<dbReference type="InterPro" id="IPR041715">
    <property type="entry name" value="HisRS-like_core"/>
</dbReference>
<dbReference type="InterPro" id="IPR004516">
    <property type="entry name" value="HisRS/HisZ"/>
</dbReference>
<dbReference type="NCBIfam" id="TIGR00442">
    <property type="entry name" value="hisS"/>
    <property type="match status" value="1"/>
</dbReference>
<dbReference type="PANTHER" id="PTHR11476:SF7">
    <property type="entry name" value="HISTIDINE--TRNA LIGASE"/>
    <property type="match status" value="1"/>
</dbReference>
<dbReference type="PANTHER" id="PTHR11476">
    <property type="entry name" value="HISTIDYL-TRNA SYNTHETASE"/>
    <property type="match status" value="1"/>
</dbReference>
<dbReference type="Pfam" id="PF03129">
    <property type="entry name" value="HGTP_anticodon"/>
    <property type="match status" value="1"/>
</dbReference>
<dbReference type="Pfam" id="PF13393">
    <property type="entry name" value="tRNA-synt_His"/>
    <property type="match status" value="1"/>
</dbReference>
<dbReference type="PIRSF" id="PIRSF001549">
    <property type="entry name" value="His-tRNA_synth"/>
    <property type="match status" value="1"/>
</dbReference>
<dbReference type="SUPFAM" id="SSF52954">
    <property type="entry name" value="Class II aaRS ABD-related"/>
    <property type="match status" value="1"/>
</dbReference>
<dbReference type="SUPFAM" id="SSF55681">
    <property type="entry name" value="Class II aaRS and biotin synthetases"/>
    <property type="match status" value="1"/>
</dbReference>
<dbReference type="PROSITE" id="PS50862">
    <property type="entry name" value="AA_TRNA_LIGASE_II"/>
    <property type="match status" value="1"/>
</dbReference>
<proteinExistence type="inferred from homology"/>
<reference key="1">
    <citation type="journal article" date="2003" name="Proc. Natl. Acad. Sci. U.S.A.">
        <title>The complete genome sequence of the carcinogenic bacterium Helicobacter hepaticus.</title>
        <authorList>
            <person name="Suerbaum S."/>
            <person name="Josenhans C."/>
            <person name="Sterzenbach T."/>
            <person name="Drescher B."/>
            <person name="Brandt P."/>
            <person name="Bell M."/>
            <person name="Droege M."/>
            <person name="Fartmann B."/>
            <person name="Fischer H.-P."/>
            <person name="Ge Z."/>
            <person name="Hoerster A."/>
            <person name="Holland R."/>
            <person name="Klein K."/>
            <person name="Koenig J."/>
            <person name="Macko L."/>
            <person name="Mendz G.L."/>
            <person name="Nyakatura G."/>
            <person name="Schauer D.B."/>
            <person name="Shen Z."/>
            <person name="Weber J."/>
            <person name="Frosch M."/>
            <person name="Fox J.G."/>
        </authorList>
    </citation>
    <scope>NUCLEOTIDE SEQUENCE [LARGE SCALE GENOMIC DNA]</scope>
    <source>
        <strain>ATCC 51449 / 3B1</strain>
    </source>
</reference>
<evidence type="ECO:0000255" key="1">
    <source>
        <dbReference type="HAMAP-Rule" id="MF_00127"/>
    </source>
</evidence>
<feature type="chain" id="PRO_0000136173" description="Histidine--tRNA ligase">
    <location>
        <begin position="1"/>
        <end position="442"/>
    </location>
</feature>
<name>SYH_HELHP</name>
<keyword id="KW-0030">Aminoacyl-tRNA synthetase</keyword>
<keyword id="KW-0067">ATP-binding</keyword>
<keyword id="KW-0963">Cytoplasm</keyword>
<keyword id="KW-0436">Ligase</keyword>
<keyword id="KW-0547">Nucleotide-binding</keyword>
<keyword id="KW-0648">Protein biosynthesis</keyword>
<keyword id="KW-1185">Reference proteome</keyword>